<proteinExistence type="evidence at transcript level"/>
<accession>Q9SYB5</accession>
<accession>Q67ZL6</accession>
<dbReference type="EMBL" id="AC005882">
    <property type="protein sequence ID" value="AAD21423.1"/>
    <property type="molecule type" value="Genomic_DNA"/>
</dbReference>
<dbReference type="EMBL" id="CP002684">
    <property type="protein sequence ID" value="AEE33886.1"/>
    <property type="molecule type" value="Genomic_DNA"/>
</dbReference>
<dbReference type="EMBL" id="CP002684">
    <property type="protein sequence ID" value="ANM58452.1"/>
    <property type="molecule type" value="Genomic_DNA"/>
</dbReference>
<dbReference type="EMBL" id="AK176101">
    <property type="protein sequence ID" value="BAD43864.1"/>
    <property type="molecule type" value="mRNA"/>
</dbReference>
<dbReference type="PIR" id="G96643">
    <property type="entry name" value="G96643"/>
</dbReference>
<dbReference type="RefSeq" id="NP_001320885.1">
    <property type="nucleotide sequence ID" value="NM_001334000.1"/>
</dbReference>
<dbReference type="RefSeq" id="NP_176372.1">
    <property type="nucleotide sequence ID" value="NM_104861.2"/>
</dbReference>
<dbReference type="SMR" id="Q9SYB5"/>
<dbReference type="BioGRID" id="27699">
    <property type="interactions" value="3"/>
</dbReference>
<dbReference type="FunCoup" id="Q9SYB5">
    <property type="interactions" value="2074"/>
</dbReference>
<dbReference type="STRING" id="3702.Q9SYB5"/>
<dbReference type="GlyCosmos" id="Q9SYB5">
    <property type="glycosylation" value="1 site, No reported glycans"/>
</dbReference>
<dbReference type="GlyGen" id="Q9SYB5">
    <property type="glycosylation" value="1 site"/>
</dbReference>
<dbReference type="PaxDb" id="3702-AT1G61790.1"/>
<dbReference type="ProteomicsDB" id="226038"/>
<dbReference type="EnsemblPlants" id="AT1G61790.1">
    <property type="protein sequence ID" value="AT1G61790.1"/>
    <property type="gene ID" value="AT1G61790"/>
</dbReference>
<dbReference type="EnsemblPlants" id="AT1G61790.2">
    <property type="protein sequence ID" value="AT1G61790.2"/>
    <property type="gene ID" value="AT1G61790"/>
</dbReference>
<dbReference type="GeneID" id="842476"/>
<dbReference type="Gramene" id="AT1G61790.1">
    <property type="protein sequence ID" value="AT1G61790.1"/>
    <property type="gene ID" value="AT1G61790"/>
</dbReference>
<dbReference type="Gramene" id="AT1G61790.2">
    <property type="protein sequence ID" value="AT1G61790.2"/>
    <property type="gene ID" value="AT1G61790"/>
</dbReference>
<dbReference type="KEGG" id="ath:AT1G61790"/>
<dbReference type="Araport" id="AT1G61790"/>
<dbReference type="TAIR" id="AT1G61790">
    <property type="gene designation" value="OST3/6"/>
</dbReference>
<dbReference type="eggNOG" id="KOG2603">
    <property type="taxonomic scope" value="Eukaryota"/>
</dbReference>
<dbReference type="HOGENOM" id="CLU_046478_0_0_1"/>
<dbReference type="InParanoid" id="Q9SYB5"/>
<dbReference type="OMA" id="VLFGMYS"/>
<dbReference type="OrthoDB" id="67566at2759"/>
<dbReference type="PhylomeDB" id="Q9SYB5"/>
<dbReference type="CD-CODE" id="4299E36E">
    <property type="entry name" value="Nucleolus"/>
</dbReference>
<dbReference type="PRO" id="PR:Q9SYB5"/>
<dbReference type="Proteomes" id="UP000006548">
    <property type="component" value="Chromosome 1"/>
</dbReference>
<dbReference type="ExpressionAtlas" id="Q9SYB5">
    <property type="expression patterns" value="baseline and differential"/>
</dbReference>
<dbReference type="GO" id="GO:0005783">
    <property type="term" value="C:endoplasmic reticulum"/>
    <property type="evidence" value="ECO:0000314"/>
    <property type="project" value="TAIR"/>
</dbReference>
<dbReference type="GO" id="GO:0005634">
    <property type="term" value="C:nucleus"/>
    <property type="evidence" value="ECO:0007005"/>
    <property type="project" value="TAIR"/>
</dbReference>
<dbReference type="GO" id="GO:0008250">
    <property type="term" value="C:oligosaccharyltransferase complex"/>
    <property type="evidence" value="ECO:0000353"/>
    <property type="project" value="TAIR"/>
</dbReference>
<dbReference type="GO" id="GO:0010483">
    <property type="term" value="P:pollen tube reception"/>
    <property type="evidence" value="ECO:0000315"/>
    <property type="project" value="TAIR"/>
</dbReference>
<dbReference type="GO" id="GO:0006487">
    <property type="term" value="P:protein N-linked glycosylation"/>
    <property type="evidence" value="ECO:0000315"/>
    <property type="project" value="TAIR"/>
</dbReference>
<dbReference type="FunFam" id="3.40.30.10:FF:000205">
    <property type="entry name" value="Probable dolichyl-diphosphooligosaccharide--protein glycosyltransferase subunit 3"/>
    <property type="match status" value="1"/>
</dbReference>
<dbReference type="Gene3D" id="3.40.30.10">
    <property type="entry name" value="Glutaredoxin"/>
    <property type="match status" value="1"/>
</dbReference>
<dbReference type="InterPro" id="IPR021149">
    <property type="entry name" value="OligosaccharylTrfase_OST3/OST6"/>
</dbReference>
<dbReference type="PANTHER" id="PTHR12692">
    <property type="entry name" value="DOLICHYL-DIPHOSPHOOLIGOSACCHARIDE--PROTEIN GLYCOSYLTRANSFERASE-RELATED"/>
    <property type="match status" value="1"/>
</dbReference>
<dbReference type="PANTHER" id="PTHR12692:SF0">
    <property type="entry name" value="GH11935P"/>
    <property type="match status" value="1"/>
</dbReference>
<dbReference type="Pfam" id="PF04756">
    <property type="entry name" value="OST3_OST6"/>
    <property type="match status" value="1"/>
</dbReference>
<comment type="function">
    <text evidence="2">Subunit of the oligosaccharyl transferase (OST) complex that catalyzes the initial transfer of a defined glycan (Glc(3)Man(9)GlcNAc(2) in eukaryotes) from the lipid carrier dolichol-pyrophosphate to an asparagine residue within an Asn-X-Ser/Thr consensus motif in nascent polypeptide chains, the first step in protein N-glycosylation. N-glycosylation occurs cotranslationally and the complex associates with the Sec61 complex at the channel-forming translocon complex that mediates protein translocation across the endoplasmic reticulum (ER). All subunits are required for a maximal enzyme activity.</text>
</comment>
<comment type="subunit">
    <text evidence="2">Component of the oligosaccharyltransferase (OST) complex.</text>
</comment>
<comment type="subcellular location">
    <subcellularLocation>
        <location evidence="1">Endoplasmic reticulum membrane</location>
        <topology evidence="1">Multi-pass membrane protein</topology>
    </subcellularLocation>
</comment>
<comment type="similarity">
    <text evidence="4">Belongs to the OST3/OST6 family.</text>
</comment>
<keyword id="KW-0256">Endoplasmic reticulum</keyword>
<keyword id="KW-0325">Glycoprotein</keyword>
<keyword id="KW-0472">Membrane</keyword>
<keyword id="KW-1185">Reference proteome</keyword>
<keyword id="KW-0732">Signal</keyword>
<keyword id="KW-0812">Transmembrane</keyword>
<keyword id="KW-1133">Transmembrane helix</keyword>
<name>OST3B_ARATH</name>
<gene>
    <name type="primary">OST3B</name>
    <name type="ordered locus">At1g61790</name>
    <name type="ORF">T13M11.15</name>
</gene>
<reference key="1">
    <citation type="journal article" date="2000" name="Nature">
        <title>Sequence and analysis of chromosome 1 of the plant Arabidopsis thaliana.</title>
        <authorList>
            <person name="Theologis A."/>
            <person name="Ecker J.R."/>
            <person name="Palm C.J."/>
            <person name="Federspiel N.A."/>
            <person name="Kaul S."/>
            <person name="White O."/>
            <person name="Alonso J."/>
            <person name="Altafi H."/>
            <person name="Araujo R."/>
            <person name="Bowman C.L."/>
            <person name="Brooks S.Y."/>
            <person name="Buehler E."/>
            <person name="Chan A."/>
            <person name="Chao Q."/>
            <person name="Chen H."/>
            <person name="Cheuk R.F."/>
            <person name="Chin C.W."/>
            <person name="Chung M.K."/>
            <person name="Conn L."/>
            <person name="Conway A.B."/>
            <person name="Conway A.R."/>
            <person name="Creasy T.H."/>
            <person name="Dewar K."/>
            <person name="Dunn P."/>
            <person name="Etgu P."/>
            <person name="Feldblyum T.V."/>
            <person name="Feng J.-D."/>
            <person name="Fong B."/>
            <person name="Fujii C.Y."/>
            <person name="Gill J.E."/>
            <person name="Goldsmith A.D."/>
            <person name="Haas B."/>
            <person name="Hansen N.F."/>
            <person name="Hughes B."/>
            <person name="Huizar L."/>
            <person name="Hunter J.L."/>
            <person name="Jenkins J."/>
            <person name="Johnson-Hopson C."/>
            <person name="Khan S."/>
            <person name="Khaykin E."/>
            <person name="Kim C.J."/>
            <person name="Koo H.L."/>
            <person name="Kremenetskaia I."/>
            <person name="Kurtz D.B."/>
            <person name="Kwan A."/>
            <person name="Lam B."/>
            <person name="Langin-Hooper S."/>
            <person name="Lee A."/>
            <person name="Lee J.M."/>
            <person name="Lenz C.A."/>
            <person name="Li J.H."/>
            <person name="Li Y.-P."/>
            <person name="Lin X."/>
            <person name="Liu S.X."/>
            <person name="Liu Z.A."/>
            <person name="Luros J.S."/>
            <person name="Maiti R."/>
            <person name="Marziali A."/>
            <person name="Militscher J."/>
            <person name="Miranda M."/>
            <person name="Nguyen M."/>
            <person name="Nierman W.C."/>
            <person name="Osborne B.I."/>
            <person name="Pai G."/>
            <person name="Peterson J."/>
            <person name="Pham P.K."/>
            <person name="Rizzo M."/>
            <person name="Rooney T."/>
            <person name="Rowley D."/>
            <person name="Sakano H."/>
            <person name="Salzberg S.L."/>
            <person name="Schwartz J.R."/>
            <person name="Shinn P."/>
            <person name="Southwick A.M."/>
            <person name="Sun H."/>
            <person name="Tallon L.J."/>
            <person name="Tambunga G."/>
            <person name="Toriumi M.J."/>
            <person name="Town C.D."/>
            <person name="Utterback T."/>
            <person name="Van Aken S."/>
            <person name="Vaysberg M."/>
            <person name="Vysotskaia V.S."/>
            <person name="Walker M."/>
            <person name="Wu D."/>
            <person name="Yu G."/>
            <person name="Fraser C.M."/>
            <person name="Venter J.C."/>
            <person name="Davis R.W."/>
        </authorList>
    </citation>
    <scope>NUCLEOTIDE SEQUENCE [LARGE SCALE GENOMIC DNA]</scope>
    <source>
        <strain>cv. Columbia</strain>
    </source>
</reference>
<reference key="2">
    <citation type="journal article" date="2017" name="Plant J.">
        <title>Araport11: a complete reannotation of the Arabidopsis thaliana reference genome.</title>
        <authorList>
            <person name="Cheng C.Y."/>
            <person name="Krishnakumar V."/>
            <person name="Chan A.P."/>
            <person name="Thibaud-Nissen F."/>
            <person name="Schobel S."/>
            <person name="Town C.D."/>
        </authorList>
    </citation>
    <scope>GENOME REANNOTATION</scope>
    <source>
        <strain>cv. Columbia</strain>
    </source>
</reference>
<reference key="3">
    <citation type="submission" date="2004-09" db="EMBL/GenBank/DDBJ databases">
        <title>Large-scale analysis of RIKEN Arabidopsis full-length (RAFL) cDNAs.</title>
        <authorList>
            <person name="Totoki Y."/>
            <person name="Seki M."/>
            <person name="Ishida J."/>
            <person name="Nakajima M."/>
            <person name="Enju A."/>
            <person name="Kamiya A."/>
            <person name="Narusaka M."/>
            <person name="Shin-i T."/>
            <person name="Nakagawa M."/>
            <person name="Sakamoto N."/>
            <person name="Oishi K."/>
            <person name="Kohara Y."/>
            <person name="Kobayashi M."/>
            <person name="Toyoda A."/>
            <person name="Sakaki Y."/>
            <person name="Sakurai T."/>
            <person name="Iida K."/>
            <person name="Akiyama K."/>
            <person name="Satou M."/>
            <person name="Toyoda T."/>
            <person name="Konagaya A."/>
            <person name="Carninci P."/>
            <person name="Kawai J."/>
            <person name="Hayashizaki Y."/>
            <person name="Shinozaki K."/>
        </authorList>
    </citation>
    <scope>NUCLEOTIDE SEQUENCE [LARGE SCALE MRNA] OF 309-346</scope>
    <source>
        <strain>cv. Columbia</strain>
    </source>
</reference>
<sequence>MALKSKLVSLLFLIATLSSTFAASFSDSDSDSDLLNELVSLRSTSESGVIHLDDHGISKFLTSASTPRPYSLLVFFDATQLHSKNELRLQELRREFGIVSASFLANNNGSEGTKLFFCEIEFSKSQSSFQLFGVNALPHIRLVSPSISNLRDESGQMDQSDYSRLAESMAEFVEQRTKLKVGPIQRPPLLSKPQIGIIVALIVIATPFIIKRVLKGETILHDTRLWLSGAIFIYFFSVAGTMHNIIRKMPMFLQDRNDPNKLVFFYQGSGMQLGAEGFAVGFLYTVVGLLLAFVTNVLVRVKNITAQRLIMLLALFISFWAVKKVVYLDNWKTGYGIHPYWPSSWR</sequence>
<feature type="signal peptide" evidence="3">
    <location>
        <begin position="1"/>
        <end position="22"/>
    </location>
</feature>
<feature type="chain" id="PRO_0000420816" description="Probable dolichyl-diphosphooligosaccharide--protein glycosyltransferase subunit 3B">
    <location>
        <begin position="23"/>
        <end position="346"/>
    </location>
</feature>
<feature type="topological domain" description="Lumenal" evidence="3">
    <location>
        <begin position="23"/>
        <end position="189"/>
    </location>
</feature>
<feature type="transmembrane region" description="Helical" evidence="3">
    <location>
        <begin position="190"/>
        <end position="210"/>
    </location>
</feature>
<feature type="topological domain" description="Cytoplasmic" evidence="3">
    <location>
        <begin position="211"/>
        <end position="225"/>
    </location>
</feature>
<feature type="transmembrane region" description="Helical" evidence="3">
    <location>
        <begin position="226"/>
        <end position="246"/>
    </location>
</feature>
<feature type="topological domain" description="Lumenal" evidence="3">
    <location>
        <begin position="247"/>
        <end position="277"/>
    </location>
</feature>
<feature type="transmembrane region" description="Helical" evidence="3">
    <location>
        <begin position="278"/>
        <end position="298"/>
    </location>
</feature>
<feature type="topological domain" description="Cytoplasmic" evidence="3">
    <location>
        <begin position="299"/>
        <end position="308"/>
    </location>
</feature>
<feature type="transmembrane region" description="Helical" evidence="3">
    <location>
        <begin position="309"/>
        <end position="329"/>
    </location>
</feature>
<feature type="topological domain" description="Lumenal" evidence="3">
    <location>
        <begin position="330"/>
        <end position="346"/>
    </location>
</feature>
<feature type="glycosylation site" description="N-linked (GlcNAc...) asparagine" evidence="3">
    <location>
        <position position="108"/>
    </location>
</feature>
<protein>
    <recommendedName>
        <fullName>Probable dolichyl-diphosphooligosaccharide--protein glycosyltransferase subunit 3B</fullName>
    </recommendedName>
</protein>
<evidence type="ECO:0000250" key="1"/>
<evidence type="ECO:0000250" key="2">
    <source>
        <dbReference type="UniProtKB" id="P48439"/>
    </source>
</evidence>
<evidence type="ECO:0000255" key="3"/>
<evidence type="ECO:0000305" key="4"/>
<organism>
    <name type="scientific">Arabidopsis thaliana</name>
    <name type="common">Mouse-ear cress</name>
    <dbReference type="NCBI Taxonomy" id="3702"/>
    <lineage>
        <taxon>Eukaryota</taxon>
        <taxon>Viridiplantae</taxon>
        <taxon>Streptophyta</taxon>
        <taxon>Embryophyta</taxon>
        <taxon>Tracheophyta</taxon>
        <taxon>Spermatophyta</taxon>
        <taxon>Magnoliopsida</taxon>
        <taxon>eudicotyledons</taxon>
        <taxon>Gunneridae</taxon>
        <taxon>Pentapetalae</taxon>
        <taxon>rosids</taxon>
        <taxon>malvids</taxon>
        <taxon>Brassicales</taxon>
        <taxon>Brassicaceae</taxon>
        <taxon>Camelineae</taxon>
        <taxon>Arabidopsis</taxon>
    </lineage>
</organism>